<evidence type="ECO:0000255" key="1">
    <source>
        <dbReference type="HAMAP-Rule" id="MF_00166"/>
    </source>
</evidence>
<feature type="chain" id="PRO_1000123609" description="DNA-binding protein Fis">
    <location>
        <begin position="1"/>
        <end position="98"/>
    </location>
</feature>
<feature type="DNA-binding region" description="H-T-H motif" evidence="1">
    <location>
        <begin position="74"/>
        <end position="93"/>
    </location>
</feature>
<comment type="function">
    <text evidence="1">Activates ribosomal RNA transcription. Plays a direct role in upstream activation of rRNA promoters.</text>
</comment>
<comment type="subunit">
    <text evidence="1">Homodimer.</text>
</comment>
<comment type="similarity">
    <text evidence="1">Belongs to the transcriptional regulatory Fis family.</text>
</comment>
<proteinExistence type="inferred from homology"/>
<accession>C0PZT1</accession>
<reference key="1">
    <citation type="journal article" date="2009" name="PLoS ONE">
        <title>Salmonella paratyphi C: genetic divergence from Salmonella choleraesuis and pathogenic convergence with Salmonella typhi.</title>
        <authorList>
            <person name="Liu W.-Q."/>
            <person name="Feng Y."/>
            <person name="Wang Y."/>
            <person name="Zou Q.-H."/>
            <person name="Chen F."/>
            <person name="Guo J.-T."/>
            <person name="Peng Y.-H."/>
            <person name="Jin Y."/>
            <person name="Li Y.-G."/>
            <person name="Hu S.-N."/>
            <person name="Johnston R.N."/>
            <person name="Liu G.-R."/>
            <person name="Liu S.-L."/>
        </authorList>
    </citation>
    <scope>NUCLEOTIDE SEQUENCE [LARGE SCALE GENOMIC DNA]</scope>
    <source>
        <strain>RKS4594</strain>
    </source>
</reference>
<name>FIS_SALPC</name>
<keyword id="KW-0010">Activator</keyword>
<keyword id="KW-0238">DNA-binding</keyword>
<keyword id="KW-0804">Transcription</keyword>
<keyword id="KW-0805">Transcription regulation</keyword>
<gene>
    <name evidence="1" type="primary">fis</name>
    <name type="ordered locus">SPC_3456</name>
</gene>
<organism>
    <name type="scientific">Salmonella paratyphi C (strain RKS4594)</name>
    <dbReference type="NCBI Taxonomy" id="476213"/>
    <lineage>
        <taxon>Bacteria</taxon>
        <taxon>Pseudomonadati</taxon>
        <taxon>Pseudomonadota</taxon>
        <taxon>Gammaproteobacteria</taxon>
        <taxon>Enterobacterales</taxon>
        <taxon>Enterobacteriaceae</taxon>
        <taxon>Salmonella</taxon>
    </lineage>
</organism>
<protein>
    <recommendedName>
        <fullName evidence="1">DNA-binding protein Fis</fullName>
    </recommendedName>
</protein>
<sequence>MFEQRVNSDVLTVSTVNSQDQVTQKPLRDSVKQALKNYFAQLNGQDVNDLYELVLAEVEQPLLDMVMQYTRGNQTRAALMMGINRGTLRKKLKKYGMN</sequence>
<dbReference type="EMBL" id="CP000857">
    <property type="protein sequence ID" value="ACN47541.1"/>
    <property type="molecule type" value="Genomic_DNA"/>
</dbReference>
<dbReference type="RefSeq" id="WP_000462905.1">
    <property type="nucleotide sequence ID" value="NC_012125.1"/>
</dbReference>
<dbReference type="SMR" id="C0PZT1"/>
<dbReference type="GeneID" id="98390389"/>
<dbReference type="KEGG" id="sei:SPC_3456"/>
<dbReference type="HOGENOM" id="CLU_158040_3_0_6"/>
<dbReference type="Proteomes" id="UP000001599">
    <property type="component" value="Chromosome"/>
</dbReference>
<dbReference type="GO" id="GO:0003700">
    <property type="term" value="F:DNA-binding transcription factor activity"/>
    <property type="evidence" value="ECO:0007669"/>
    <property type="project" value="UniProtKB-UniRule"/>
</dbReference>
<dbReference type="GO" id="GO:0043565">
    <property type="term" value="F:sequence-specific DNA binding"/>
    <property type="evidence" value="ECO:0007669"/>
    <property type="project" value="InterPro"/>
</dbReference>
<dbReference type="FunFam" id="1.10.10.60:FF:000006">
    <property type="entry name" value="DNA-binding protein Fis"/>
    <property type="match status" value="1"/>
</dbReference>
<dbReference type="Gene3D" id="1.10.10.60">
    <property type="entry name" value="Homeodomain-like"/>
    <property type="match status" value="1"/>
</dbReference>
<dbReference type="HAMAP" id="MF_00166">
    <property type="entry name" value="DNA_binding_Fis"/>
    <property type="match status" value="1"/>
</dbReference>
<dbReference type="InterPro" id="IPR005412">
    <property type="entry name" value="Fis_DNA-bd"/>
</dbReference>
<dbReference type="InterPro" id="IPR009057">
    <property type="entry name" value="Homeodomain-like_sf"/>
</dbReference>
<dbReference type="InterPro" id="IPR002197">
    <property type="entry name" value="HTH_Fis"/>
</dbReference>
<dbReference type="InterPro" id="IPR050207">
    <property type="entry name" value="Trans_regulatory_Fis"/>
</dbReference>
<dbReference type="NCBIfam" id="NF001659">
    <property type="entry name" value="PRK00430.1"/>
    <property type="match status" value="1"/>
</dbReference>
<dbReference type="PANTHER" id="PTHR47918">
    <property type="entry name" value="DNA-BINDING PROTEIN FIS"/>
    <property type="match status" value="1"/>
</dbReference>
<dbReference type="PANTHER" id="PTHR47918:SF1">
    <property type="entry name" value="DNA-BINDING PROTEIN FIS"/>
    <property type="match status" value="1"/>
</dbReference>
<dbReference type="Pfam" id="PF02954">
    <property type="entry name" value="HTH_8"/>
    <property type="match status" value="1"/>
</dbReference>
<dbReference type="PIRSF" id="PIRSF002097">
    <property type="entry name" value="DNA-binding_Fis"/>
    <property type="match status" value="1"/>
</dbReference>
<dbReference type="PRINTS" id="PR01591">
    <property type="entry name" value="DNABINDNGFIS"/>
</dbReference>
<dbReference type="PRINTS" id="PR01590">
    <property type="entry name" value="HTHFIS"/>
</dbReference>
<dbReference type="SUPFAM" id="SSF46689">
    <property type="entry name" value="Homeodomain-like"/>
    <property type="match status" value="1"/>
</dbReference>